<sequence length="856" mass="94878">MSGRDNRGAGGGGGGHQPLSNAMGKLKEKLTRVGDELGYHRVESNLSTSNTATSLDTILPEDPFLFPQVSPQRHPQTVRTQRLLEDEPPLSFRPLLEDDDINEPPTQQPHRSPLRASGSLELTPLPPPPTSLEIREHRDRQQRGAQGDELQRSKQSLKGSRVSFERRDTGNSNTNNNKAAESSDEDSFEEKRTGFQQQKATSVDHKGILKDLKHILANDNRRQFQAKKHVSLDVKGTRFLQDLLKESSSEEEFHKTRREFQGRKHQSLDPRVTFKLDKVLQGSSTDSDEEGEDAEHKRLIHRPKDITKPVIIDLKDLESESDEDFLTSRQHFQQQRSISTDSRKSRRLYEMDEMGNKRGENIRHAVPFVRQITEDGKPKLEVYRPTTNPIFIWTQVLAALSVSLGSLVVGFVSAYTSPALVSMTDRNITSFEVTQDAGSWVGGIMPLAGLAGGIAGGPLIEYLGRRNTILATAVPFIVSSLLIACAVNVAMVLCGRFLAGFCVGIASLSLPVYLGETVQPEVRGTLGLLPTAFGNIGILLCFVAGSFMNWSMLAFLGAALPVPFLILMFLIPETPRWFVSRGREERARKALSWLRGKEADVEPELKGLMRSQADADRQATQNTMLELLKRNNLKPLSISLGLMFFQQLSGINAVIFYTVQIFKDAGSTIDGNICTIIVGVVNFLATFIGIVLIDRAGRKILLYVSNIAMILTLFVLGGFFYCKAHGPDVSNLGWLPLTCFVIYILGFSLGFGPIPWLMMGEILPAKIRGSAASVATAFNWSCTFVVTKTFQDLTVAMGAHGAFWLFGAICFVGLFFVIIYVPETQGKTLEDIERKMMGRVRRMSSVANIKPLSFNM</sequence>
<accession>B3NSE1</accession>
<reference evidence="4" key="1">
    <citation type="journal article" date="2007" name="Nature">
        <title>Evolution of genes and genomes on the Drosophila phylogeny.</title>
        <authorList>
            <consortium name="Drosophila 12 genomes consortium"/>
        </authorList>
    </citation>
    <scope>NUCLEOTIDE SEQUENCE [LARGE SCALE GENOMIC DNA]</scope>
    <source>
        <strain evidence="4">Tucson 14021-0224.01</strain>
    </source>
</reference>
<name>TRET1_DROER</name>
<dbReference type="EMBL" id="CH954179">
    <property type="protein sequence ID" value="EDV56443.1"/>
    <property type="molecule type" value="Genomic_DNA"/>
</dbReference>
<dbReference type="RefSeq" id="XP_001976043.2">
    <property type="nucleotide sequence ID" value="XM_001976007.2"/>
</dbReference>
<dbReference type="SMR" id="B3NSE1"/>
<dbReference type="GlyCosmos" id="B3NSE1">
    <property type="glycosylation" value="2 sites, No reported glycans"/>
</dbReference>
<dbReference type="EnsemblMetazoa" id="XM_026979913.1">
    <property type="protein sequence ID" value="XP_026835714.1"/>
    <property type="gene ID" value="LOC6546604"/>
</dbReference>
<dbReference type="eggNOG" id="KOG0254">
    <property type="taxonomic scope" value="Eukaryota"/>
</dbReference>
<dbReference type="HOGENOM" id="CLU_016710_0_0_1"/>
<dbReference type="OMA" id="IFIWTQS"/>
<dbReference type="OrthoDB" id="6339427at2759"/>
<dbReference type="PhylomeDB" id="B3NSE1"/>
<dbReference type="Proteomes" id="UP000008711">
    <property type="component" value="Unassembled WGS sequence"/>
</dbReference>
<dbReference type="GO" id="GO:0005886">
    <property type="term" value="C:plasma membrane"/>
    <property type="evidence" value="ECO:0000250"/>
    <property type="project" value="UniProtKB"/>
</dbReference>
<dbReference type="GO" id="GO:0051119">
    <property type="term" value="F:sugar transmembrane transporter activity"/>
    <property type="evidence" value="ECO:0007669"/>
    <property type="project" value="InterPro"/>
</dbReference>
<dbReference type="GO" id="GO:0015574">
    <property type="term" value="F:trehalose transmembrane transporter activity"/>
    <property type="evidence" value="ECO:0000250"/>
    <property type="project" value="UniProtKB"/>
</dbReference>
<dbReference type="GO" id="GO:0015771">
    <property type="term" value="P:trehalose transport"/>
    <property type="evidence" value="ECO:0000250"/>
    <property type="project" value="UniProtKB"/>
</dbReference>
<dbReference type="CDD" id="cd17358">
    <property type="entry name" value="MFS_GLUT6_8_Class3_like"/>
    <property type="match status" value="1"/>
</dbReference>
<dbReference type="FunFam" id="1.20.1250.20:FF:000055">
    <property type="entry name" value="Facilitated trehalose transporter Tret1-2 homolog"/>
    <property type="match status" value="1"/>
</dbReference>
<dbReference type="Gene3D" id="1.20.1250.20">
    <property type="entry name" value="MFS general substrate transporter like domains"/>
    <property type="match status" value="1"/>
</dbReference>
<dbReference type="InterPro" id="IPR020846">
    <property type="entry name" value="MFS_dom"/>
</dbReference>
<dbReference type="InterPro" id="IPR044775">
    <property type="entry name" value="MFS_ERD6/Tret1-like"/>
</dbReference>
<dbReference type="InterPro" id="IPR005828">
    <property type="entry name" value="MFS_sugar_transport-like"/>
</dbReference>
<dbReference type="InterPro" id="IPR036259">
    <property type="entry name" value="MFS_trans_sf"/>
</dbReference>
<dbReference type="InterPro" id="IPR050549">
    <property type="entry name" value="MFS_Trehalose_Transporter"/>
</dbReference>
<dbReference type="InterPro" id="IPR003663">
    <property type="entry name" value="Sugar/inositol_transpt"/>
</dbReference>
<dbReference type="InterPro" id="IPR005829">
    <property type="entry name" value="Sugar_transporter_CS"/>
</dbReference>
<dbReference type="NCBIfam" id="TIGR00879">
    <property type="entry name" value="SP"/>
    <property type="match status" value="1"/>
</dbReference>
<dbReference type="PANTHER" id="PTHR48021">
    <property type="match status" value="1"/>
</dbReference>
<dbReference type="PANTHER" id="PTHR48021:SF96">
    <property type="entry name" value="FACILITATED TREHALOSE TRANSPORTER TRET1-1-RELATED"/>
    <property type="match status" value="1"/>
</dbReference>
<dbReference type="Pfam" id="PF00083">
    <property type="entry name" value="Sugar_tr"/>
    <property type="match status" value="1"/>
</dbReference>
<dbReference type="PRINTS" id="PR00171">
    <property type="entry name" value="SUGRTRNSPORT"/>
</dbReference>
<dbReference type="SUPFAM" id="SSF103473">
    <property type="entry name" value="MFS general substrate transporter"/>
    <property type="match status" value="1"/>
</dbReference>
<dbReference type="PROSITE" id="PS50850">
    <property type="entry name" value="MFS"/>
    <property type="match status" value="1"/>
</dbReference>
<dbReference type="PROSITE" id="PS00216">
    <property type="entry name" value="SUGAR_TRANSPORT_1"/>
    <property type="match status" value="2"/>
</dbReference>
<dbReference type="PROSITE" id="PS00217">
    <property type="entry name" value="SUGAR_TRANSPORT_2"/>
    <property type="match status" value="1"/>
</dbReference>
<keyword id="KW-1003">Cell membrane</keyword>
<keyword id="KW-0325">Glycoprotein</keyword>
<keyword id="KW-0472">Membrane</keyword>
<keyword id="KW-0597">Phosphoprotein</keyword>
<keyword id="KW-0762">Sugar transport</keyword>
<keyword id="KW-0812">Transmembrane</keyword>
<keyword id="KW-1133">Transmembrane helix</keyword>
<keyword id="KW-0813">Transport</keyword>
<feature type="chain" id="PRO_0000395543" description="Facilitated trehalose transporter Tret1">
    <location>
        <begin position="1"/>
        <end position="856"/>
    </location>
</feature>
<feature type="topological domain" description="Cytoplasmic" evidence="2">
    <location>
        <begin position="1"/>
        <end position="389"/>
    </location>
</feature>
<feature type="transmembrane region" description="Helical; Name=1" evidence="2">
    <location>
        <begin position="390"/>
        <end position="410"/>
    </location>
</feature>
<feature type="topological domain" description="Extracellular" evidence="2">
    <location>
        <begin position="411"/>
        <end position="439"/>
    </location>
</feature>
<feature type="transmembrane region" description="Helical; Name=2" evidence="2">
    <location>
        <begin position="440"/>
        <end position="460"/>
    </location>
</feature>
<feature type="topological domain" description="Cytoplasmic" evidence="2">
    <location>
        <begin position="461"/>
        <end position="472"/>
    </location>
</feature>
<feature type="transmembrane region" description="Helical; Name=3" evidence="2">
    <location>
        <begin position="473"/>
        <end position="493"/>
    </location>
</feature>
<feature type="topological domain" description="Extracellular" evidence="2">
    <location>
        <begin position="494"/>
        <end position="496"/>
    </location>
</feature>
<feature type="transmembrane region" description="Helical; Name=4" evidence="2">
    <location>
        <begin position="497"/>
        <end position="517"/>
    </location>
</feature>
<feature type="topological domain" description="Cytoplasmic" evidence="2">
    <location>
        <begin position="518"/>
        <end position="527"/>
    </location>
</feature>
<feature type="transmembrane region" description="Helical; Name=5" evidence="2">
    <location>
        <begin position="528"/>
        <end position="548"/>
    </location>
</feature>
<feature type="topological domain" description="Extracellular" evidence="2">
    <location>
        <begin position="549"/>
        <end position="551"/>
    </location>
</feature>
<feature type="transmembrane region" description="Helical; Name=6" evidence="2">
    <location>
        <begin position="552"/>
        <end position="572"/>
    </location>
</feature>
<feature type="topological domain" description="Cytoplasmic" evidence="2">
    <location>
        <begin position="573"/>
        <end position="635"/>
    </location>
</feature>
<feature type="transmembrane region" description="Helical; Name=7" evidence="2">
    <location>
        <begin position="636"/>
        <end position="656"/>
    </location>
</feature>
<feature type="topological domain" description="Extracellular" evidence="2">
    <location>
        <begin position="657"/>
        <end position="672"/>
    </location>
</feature>
<feature type="transmembrane region" description="Helical; Name=8" evidence="2">
    <location>
        <begin position="673"/>
        <end position="693"/>
    </location>
</feature>
<feature type="topological domain" description="Cytoplasmic" evidence="2">
    <location>
        <begin position="694"/>
        <end position="699"/>
    </location>
</feature>
<feature type="transmembrane region" description="Helical; Name=9" evidence="2">
    <location>
        <begin position="700"/>
        <end position="720"/>
    </location>
</feature>
<feature type="topological domain" description="Extracellular" evidence="2">
    <location>
        <begin position="721"/>
        <end position="739"/>
    </location>
</feature>
<feature type="transmembrane region" description="Helical; Name=10" evidence="2">
    <location>
        <begin position="740"/>
        <end position="760"/>
    </location>
</feature>
<feature type="topological domain" description="Cytoplasmic" evidence="2">
    <location>
        <begin position="761"/>
        <end position="766"/>
    </location>
</feature>
<feature type="transmembrane region" description="Helical; Name=11" evidence="2">
    <location>
        <begin position="767"/>
        <end position="787"/>
    </location>
</feature>
<feature type="topological domain" description="Extracellular" evidence="2">
    <location>
        <begin position="788"/>
        <end position="800"/>
    </location>
</feature>
<feature type="transmembrane region" description="Helical; Name=12" evidence="2">
    <location>
        <begin position="801"/>
        <end position="821"/>
    </location>
</feature>
<feature type="topological domain" description="Cytoplasmic" evidence="2">
    <location>
        <begin position="822"/>
        <end position="856"/>
    </location>
</feature>
<feature type="region of interest" description="Disordered" evidence="3">
    <location>
        <begin position="1"/>
        <end position="27"/>
    </location>
</feature>
<feature type="region of interest" description="Disordered" evidence="3">
    <location>
        <begin position="62"/>
        <end position="202"/>
    </location>
</feature>
<feature type="region of interest" description="Disordered" evidence="3">
    <location>
        <begin position="326"/>
        <end position="345"/>
    </location>
</feature>
<feature type="compositionally biased region" description="Polar residues" evidence="3">
    <location>
        <begin position="69"/>
        <end position="80"/>
    </location>
</feature>
<feature type="compositionally biased region" description="Basic and acidic residues" evidence="3">
    <location>
        <begin position="133"/>
        <end position="142"/>
    </location>
</feature>
<feature type="compositionally biased region" description="Polar residues" evidence="3">
    <location>
        <begin position="170"/>
        <end position="180"/>
    </location>
</feature>
<feature type="compositionally biased region" description="Polar residues" evidence="3">
    <location>
        <begin position="329"/>
        <end position="340"/>
    </location>
</feature>
<feature type="modified residue" description="Phosphoserine" evidence="1">
    <location>
        <position position="247"/>
    </location>
</feature>
<feature type="modified residue" description="Phosphoserine" evidence="1">
    <location>
        <position position="248"/>
    </location>
</feature>
<feature type="modified residue" description="Phosphoserine" evidence="1">
    <location>
        <position position="249"/>
    </location>
</feature>
<feature type="modified residue" description="Phosphoserine" evidence="1">
    <location>
        <position position="319"/>
    </location>
</feature>
<feature type="modified residue" description="Phosphoserine" evidence="1">
    <location>
        <position position="321"/>
    </location>
</feature>
<feature type="modified residue" description="Phosphoserine" evidence="1">
    <location>
        <position position="844"/>
    </location>
</feature>
<feature type="modified residue" description="Phosphoserine" evidence="1">
    <location>
        <position position="845"/>
    </location>
</feature>
<feature type="glycosylation site" description="N-linked (GlcNAc...) asparagine" evidence="2">
    <location>
        <position position="427"/>
    </location>
</feature>
<feature type="glycosylation site" description="N-linked (GlcNAc...) asparagine" evidence="2">
    <location>
        <position position="549"/>
    </location>
</feature>
<gene>
    <name evidence="1" type="primary">Tret1</name>
    <name type="ORF">GG20213</name>
</gene>
<proteinExistence type="inferred from homology"/>
<evidence type="ECO:0000250" key="1">
    <source>
        <dbReference type="UniProtKB" id="A1Z8N1"/>
    </source>
</evidence>
<evidence type="ECO:0000255" key="2"/>
<evidence type="ECO:0000256" key="3">
    <source>
        <dbReference type="SAM" id="MobiDB-lite"/>
    </source>
</evidence>
<evidence type="ECO:0000312" key="4">
    <source>
        <dbReference type="EMBL" id="EDV56443.1"/>
    </source>
</evidence>
<comment type="function">
    <text evidence="1">Low-capacity facilitative transporter for trehalose. Does not transport maltose, sucrose or lactose. Mediates the bidirectional transfer of trehalose. Responsible for the transport of trehalose synthesized in the fat body and the incorporation of trehalose into other tissues that require a carbon source, thereby regulating trehalose levels in the hemolymph (By similarity).</text>
</comment>
<comment type="subcellular location">
    <subcellularLocation>
        <location evidence="1">Cell membrane</location>
        <topology evidence="1">Multi-pass membrane protein</topology>
    </subcellularLocation>
</comment>
<comment type="similarity">
    <text evidence="1 2">Belongs to the major facilitator superfamily. Sugar transporter (TC 2.A.1.1) family. Trehalose transporter subfamily.</text>
</comment>
<protein>
    <recommendedName>
        <fullName evidence="1">Facilitated trehalose transporter Tret1</fullName>
    </recommendedName>
</protein>
<organism>
    <name type="scientific">Drosophila erecta</name>
    <name type="common">Fruit fly</name>
    <dbReference type="NCBI Taxonomy" id="7220"/>
    <lineage>
        <taxon>Eukaryota</taxon>
        <taxon>Metazoa</taxon>
        <taxon>Ecdysozoa</taxon>
        <taxon>Arthropoda</taxon>
        <taxon>Hexapoda</taxon>
        <taxon>Insecta</taxon>
        <taxon>Pterygota</taxon>
        <taxon>Neoptera</taxon>
        <taxon>Endopterygota</taxon>
        <taxon>Diptera</taxon>
        <taxon>Brachycera</taxon>
        <taxon>Muscomorpha</taxon>
        <taxon>Ephydroidea</taxon>
        <taxon>Drosophilidae</taxon>
        <taxon>Drosophila</taxon>
        <taxon>Sophophora</taxon>
    </lineage>
</organism>